<dbReference type="EMBL" id="AL123456">
    <property type="protein sequence ID" value="CCP42742.1"/>
    <property type="molecule type" value="Genomic_DNA"/>
</dbReference>
<dbReference type="PIR" id="B70700">
    <property type="entry name" value="B70700"/>
</dbReference>
<dbReference type="RefSeq" id="NP_214534.1">
    <property type="nucleotide sequence ID" value="NC_000962.3"/>
</dbReference>
<dbReference type="RefSeq" id="WP_003912368.1">
    <property type="nucleotide sequence ID" value="NZ_NVQJ01000005.1"/>
</dbReference>
<dbReference type="PDB" id="2LC0">
    <property type="method" value="NMR"/>
    <property type="chains" value="A=1-132"/>
</dbReference>
<dbReference type="PDB" id="2LC1">
    <property type="method" value="NMR"/>
    <property type="chains" value="A=430-527"/>
</dbReference>
<dbReference type="PDB" id="3OUN">
    <property type="method" value="X-ray"/>
    <property type="resolution" value="2.70 A"/>
    <property type="chains" value="A=390-525"/>
</dbReference>
<dbReference type="PDB" id="3PO8">
    <property type="method" value="X-ray"/>
    <property type="resolution" value="1.50 A"/>
    <property type="chains" value="A=431-527"/>
</dbReference>
<dbReference type="PDB" id="3POA">
    <property type="method" value="X-ray"/>
    <property type="resolution" value="2.01 A"/>
    <property type="chains" value="A=431-527"/>
</dbReference>
<dbReference type="PDBsum" id="2LC0"/>
<dbReference type="PDBsum" id="2LC1"/>
<dbReference type="PDBsum" id="3OUN"/>
<dbReference type="PDBsum" id="3PO8"/>
<dbReference type="PDBsum" id="3POA"/>
<dbReference type="BMRB" id="P71590"/>
<dbReference type="SMR" id="P71590"/>
<dbReference type="DIP" id="DIP-59047N"/>
<dbReference type="FunCoup" id="P71590">
    <property type="interactions" value="1"/>
</dbReference>
<dbReference type="IntAct" id="P71590">
    <property type="interactions" value="1"/>
</dbReference>
<dbReference type="STRING" id="83332.Rv0020c"/>
<dbReference type="iPTMnet" id="P71590"/>
<dbReference type="PaxDb" id="83332-Rv0020c"/>
<dbReference type="GeneID" id="887067"/>
<dbReference type="KEGG" id="mtu:Rv0020c"/>
<dbReference type="KEGG" id="mtv:RVBD_0020c"/>
<dbReference type="TubercuList" id="Rv0020c"/>
<dbReference type="eggNOG" id="COG1716">
    <property type="taxonomic scope" value="Bacteria"/>
</dbReference>
<dbReference type="InParanoid" id="P71590"/>
<dbReference type="OrthoDB" id="151099at2"/>
<dbReference type="EvolutionaryTrace" id="P71590"/>
<dbReference type="Proteomes" id="UP000001584">
    <property type="component" value="Chromosome"/>
</dbReference>
<dbReference type="GO" id="GO:0005829">
    <property type="term" value="C:cytosol"/>
    <property type="evidence" value="ECO:0007005"/>
    <property type="project" value="MTBBASE"/>
</dbReference>
<dbReference type="GO" id="GO:0009274">
    <property type="term" value="C:peptidoglycan-based cell wall"/>
    <property type="evidence" value="ECO:0007005"/>
    <property type="project" value="MTBBASE"/>
</dbReference>
<dbReference type="GO" id="GO:0003729">
    <property type="term" value="F:mRNA binding"/>
    <property type="evidence" value="ECO:0000318"/>
    <property type="project" value="GO_Central"/>
</dbReference>
<dbReference type="CDD" id="cd22668">
    <property type="entry name" value="FHA_FhaA-like"/>
    <property type="match status" value="1"/>
</dbReference>
<dbReference type="DisProt" id="DP01671"/>
<dbReference type="FunFam" id="2.60.200.20:FF:000013">
    <property type="entry name" value="FHA domain-containing protein FhaA"/>
    <property type="match status" value="1"/>
</dbReference>
<dbReference type="Gene3D" id="2.60.200.20">
    <property type="match status" value="1"/>
</dbReference>
<dbReference type="Gene3D" id="3.30.2320.60">
    <property type="entry name" value="FhaA, phosphopeptide-binding domain (DUF3662)"/>
    <property type="match status" value="1"/>
</dbReference>
<dbReference type="InterPro" id="IPR050923">
    <property type="entry name" value="Cell_Proc_Reg/RNA_Proc"/>
</dbReference>
<dbReference type="InterPro" id="IPR000253">
    <property type="entry name" value="FHA_dom"/>
</dbReference>
<dbReference type="InterPro" id="IPR022128">
    <property type="entry name" value="FhaA_N"/>
</dbReference>
<dbReference type="InterPro" id="IPR042287">
    <property type="entry name" value="FhaA_N_sf"/>
</dbReference>
<dbReference type="InterPro" id="IPR008984">
    <property type="entry name" value="SMAD_FHA_dom_sf"/>
</dbReference>
<dbReference type="PANTHER" id="PTHR23308">
    <property type="entry name" value="NUCLEAR INHIBITOR OF PROTEIN PHOSPHATASE-1"/>
    <property type="match status" value="1"/>
</dbReference>
<dbReference type="Pfam" id="PF00498">
    <property type="entry name" value="FHA"/>
    <property type="match status" value="1"/>
</dbReference>
<dbReference type="Pfam" id="PF12401">
    <property type="entry name" value="FhaA_N"/>
    <property type="match status" value="1"/>
</dbReference>
<dbReference type="SMART" id="SM00240">
    <property type="entry name" value="FHA"/>
    <property type="match status" value="1"/>
</dbReference>
<dbReference type="SUPFAM" id="SSF49879">
    <property type="entry name" value="SMAD/FHA domain"/>
    <property type="match status" value="1"/>
</dbReference>
<dbReference type="PROSITE" id="PS50006">
    <property type="entry name" value="FHA_DOMAIN"/>
    <property type="match status" value="1"/>
</dbReference>
<name>FHAA_MYCTU</name>
<protein>
    <recommendedName>
        <fullName>FHA domain-containing protein FhaA</fullName>
    </recommendedName>
</protein>
<feature type="chain" id="PRO_0000419664" description="FHA domain-containing protein FhaA">
    <location>
        <begin position="1"/>
        <end position="527"/>
    </location>
</feature>
<feature type="domain" description="FHA" evidence="1">
    <location>
        <begin position="455"/>
        <end position="504"/>
    </location>
</feature>
<feature type="region of interest" description="Disordered" evidence="2">
    <location>
        <begin position="119"/>
        <end position="426"/>
    </location>
</feature>
<feature type="compositionally biased region" description="Basic and acidic residues" evidence="2">
    <location>
        <begin position="170"/>
        <end position="188"/>
    </location>
</feature>
<feature type="compositionally biased region" description="Low complexity" evidence="2">
    <location>
        <begin position="199"/>
        <end position="209"/>
    </location>
</feature>
<feature type="compositionally biased region" description="Low complexity" evidence="2">
    <location>
        <begin position="256"/>
        <end position="266"/>
    </location>
</feature>
<feature type="compositionally biased region" description="Pro residues" evidence="2">
    <location>
        <begin position="271"/>
        <end position="283"/>
    </location>
</feature>
<feature type="compositionally biased region" description="Low complexity" evidence="2">
    <location>
        <begin position="284"/>
        <end position="299"/>
    </location>
</feature>
<feature type="compositionally biased region" description="Gly residues" evidence="2">
    <location>
        <begin position="300"/>
        <end position="322"/>
    </location>
</feature>
<feature type="compositionally biased region" description="Low complexity" evidence="2">
    <location>
        <begin position="345"/>
        <end position="366"/>
    </location>
</feature>
<feature type="modified residue" description="Phosphothreonine" evidence="4">
    <location>
        <position position="116"/>
    </location>
</feature>
<feature type="mutagenesis site" description="Lack of phosphorylation." evidence="4">
    <original>T</original>
    <variation>A</variation>
    <location>
        <position position="116"/>
    </location>
</feature>
<feature type="mutagenesis site" description="Abolishes phosphorylation by PknB. Strong decrease in affinity for MviN." evidence="3 5">
    <original>R</original>
    <variation>A</variation>
    <location>
        <position position="459"/>
    </location>
</feature>
<feature type="mutagenesis site" description="Does not affect affinity for MviN." evidence="5">
    <original>Q</original>
    <variation>A</variation>
    <location>
        <position position="461"/>
    </location>
</feature>
<feature type="mutagenesis site" description="Abolishes phosphorylation by PknB." evidence="3">
    <original>S</original>
    <variation>A</variation>
    <location>
        <position position="473"/>
    </location>
</feature>
<feature type="mutagenesis site" description="Decrease in affinity for MviN." evidence="5">
    <original>R</original>
    <variation>A</variation>
    <location>
        <position position="474"/>
    </location>
</feature>
<feature type="helix" evidence="6">
    <location>
        <begin position="22"/>
        <end position="27"/>
    </location>
</feature>
<feature type="helix" evidence="6">
    <location>
        <begin position="34"/>
        <end position="46"/>
    </location>
</feature>
<feature type="strand" evidence="6">
    <location>
        <begin position="61"/>
        <end position="67"/>
    </location>
</feature>
<feature type="helix" evidence="6">
    <location>
        <begin position="68"/>
        <end position="74"/>
    </location>
</feature>
<feature type="helix" evidence="6">
    <location>
        <begin position="79"/>
        <end position="96"/>
    </location>
</feature>
<feature type="strand" evidence="6">
    <location>
        <begin position="105"/>
        <end position="111"/>
    </location>
</feature>
<feature type="strand" evidence="6">
    <location>
        <begin position="119"/>
        <end position="124"/>
    </location>
</feature>
<feature type="strand" evidence="6">
    <location>
        <begin position="127"/>
        <end position="129"/>
    </location>
</feature>
<feature type="strand" evidence="8">
    <location>
        <begin position="434"/>
        <end position="440"/>
    </location>
</feature>
<feature type="strand" evidence="8">
    <location>
        <begin position="442"/>
        <end position="444"/>
    </location>
</feature>
<feature type="strand" evidence="8">
    <location>
        <begin position="447"/>
        <end position="449"/>
    </location>
</feature>
<feature type="strand" evidence="8">
    <location>
        <begin position="452"/>
        <end position="460"/>
    </location>
</feature>
<feature type="strand" evidence="8">
    <location>
        <begin position="464"/>
        <end position="466"/>
    </location>
</feature>
<feature type="strand" evidence="7">
    <location>
        <begin position="468"/>
        <end position="471"/>
    </location>
</feature>
<feature type="strand" evidence="8">
    <location>
        <begin position="477"/>
        <end position="481"/>
    </location>
</feature>
<feature type="strand" evidence="8">
    <location>
        <begin position="486"/>
        <end position="490"/>
    </location>
</feature>
<feature type="strand" evidence="9">
    <location>
        <begin position="497"/>
        <end position="499"/>
    </location>
</feature>
<feature type="strand" evidence="8">
    <location>
        <begin position="505"/>
        <end position="508"/>
    </location>
</feature>
<feature type="strand" evidence="8">
    <location>
        <begin position="514"/>
        <end position="517"/>
    </location>
</feature>
<feature type="strand" evidence="8">
    <location>
        <begin position="520"/>
        <end position="527"/>
    </location>
</feature>
<comment type="function">
    <text evidence="5">Regulates cell growth and peptidoglycan synthesis by binding to MviN. May inhibit the late stages of peptidoglycan synthesis.</text>
</comment>
<comment type="subunit">
    <text evidence="4 5">Interacts with (phosphorylated) MviN and (phosphorylated) PknB via the FHA domain. Binds to the PknB juxtamembrane domain with an affinity that is modulated by the degree and the pattern of phosphorylation of this juxtamembrane domain.</text>
</comment>
<comment type="interaction">
    <interactant intactId="EBI-15896562">
        <id>P71590</id>
    </interactant>
    <interactant intactId="EBI-2946037">
        <id>P9WI81</id>
        <label>pknB</label>
    </interactant>
    <organismsDiffer>false</organismsDiffer>
    <experiments>4</experiments>
</comment>
<comment type="subcellular location">
    <subcellularLocation>
        <location evidence="5">Cytoplasm</location>
    </subcellularLocation>
    <text>Localizes at the cell poles and at the septum.</text>
</comment>
<comment type="domain">
    <text evidence="4">The structure of the N-terminal domain remains unchanged upon phosphorylation.</text>
</comment>
<comment type="PTM">
    <text evidence="3 4">Phosphorylated by PknB.</text>
</comment>
<sequence>MGSQKRLVQRVERKLEQTVGDAFARIFGGSIVPQEVEALLRREAADGIQSLQGNRLLAPNEYIITLGVHDFEKLGADPELKSTGFARDLADYIQEQGWQTYGDVVVRFEQSSNLHTGQFRARGTVNPDVETHPPVIDCARPQSNHAFGAEPGVAPMSDNSSYRGGQGQGRPDEYYDDRYARPQEDPRGGPDPQGGSDPRGGYPPETGGYPPQPGYPRPRHPDQGDYPEQIGYPDQGGYPEQRGYPEQRGYPDQRGYQDQGRGYPDQGQGGYPPPYEQRPPVSPGPAAGYGAPGYDQGYRQSGGYGPSPGGGQPGYGGYGEYGRGPARHEEGSYVPSGPPGPPEQRPAYPDQGGYDQGYQQGATTYGRQDYGGGADYTRYTESPRVPGYAPQGGGYAEPAGRDYDYGQSGAPDYGQPAPGGYSGYGQGGYGSAGTSVTLQLDDGSGRTYQLREGSNIIGRGQDAQFRLPDTGVSRRHLEIRWDGQVALLADLNSTNGTTVNNAPVQEWQLADGDVIRLGHSEIIVRMH</sequence>
<gene>
    <name type="primary">fhaA</name>
    <name type="synonym">TB39.8</name>
    <name type="ordered locus">Rv0020c</name>
</gene>
<accession>P71590</accession>
<accession>F2GPM4</accession>
<accession>L0T599</accession>
<evidence type="ECO:0000255" key="1">
    <source>
        <dbReference type="PROSITE-ProRule" id="PRU00086"/>
    </source>
</evidence>
<evidence type="ECO:0000256" key="2">
    <source>
        <dbReference type="SAM" id="MobiDB-lite"/>
    </source>
</evidence>
<evidence type="ECO:0000269" key="3">
    <source>
    </source>
</evidence>
<evidence type="ECO:0000269" key="4">
    <source>
    </source>
</evidence>
<evidence type="ECO:0000269" key="5">
    <source>
    </source>
</evidence>
<evidence type="ECO:0007829" key="6">
    <source>
        <dbReference type="PDB" id="2LC0"/>
    </source>
</evidence>
<evidence type="ECO:0007829" key="7">
    <source>
        <dbReference type="PDB" id="2LC1"/>
    </source>
</evidence>
<evidence type="ECO:0007829" key="8">
    <source>
        <dbReference type="PDB" id="3PO8"/>
    </source>
</evidence>
<evidence type="ECO:0007829" key="9">
    <source>
        <dbReference type="PDB" id="3POA"/>
    </source>
</evidence>
<reference key="1">
    <citation type="journal article" date="1998" name="Nature">
        <title>Deciphering the biology of Mycobacterium tuberculosis from the complete genome sequence.</title>
        <authorList>
            <person name="Cole S.T."/>
            <person name="Brosch R."/>
            <person name="Parkhill J."/>
            <person name="Garnier T."/>
            <person name="Churcher C.M."/>
            <person name="Harris D.E."/>
            <person name="Gordon S.V."/>
            <person name="Eiglmeier K."/>
            <person name="Gas S."/>
            <person name="Barry C.E. III"/>
            <person name="Tekaia F."/>
            <person name="Badcock K."/>
            <person name="Basham D."/>
            <person name="Brown D."/>
            <person name="Chillingworth T."/>
            <person name="Connor R."/>
            <person name="Davies R.M."/>
            <person name="Devlin K."/>
            <person name="Feltwell T."/>
            <person name="Gentles S."/>
            <person name="Hamlin N."/>
            <person name="Holroyd S."/>
            <person name="Hornsby T."/>
            <person name="Jagels K."/>
            <person name="Krogh A."/>
            <person name="McLean J."/>
            <person name="Moule S."/>
            <person name="Murphy L.D."/>
            <person name="Oliver S."/>
            <person name="Osborne J."/>
            <person name="Quail M.A."/>
            <person name="Rajandream M.A."/>
            <person name="Rogers J."/>
            <person name="Rutter S."/>
            <person name="Seeger K."/>
            <person name="Skelton S."/>
            <person name="Squares S."/>
            <person name="Squares R."/>
            <person name="Sulston J.E."/>
            <person name="Taylor K."/>
            <person name="Whitehead S."/>
            <person name="Barrell B.G."/>
        </authorList>
    </citation>
    <scope>NUCLEOTIDE SEQUENCE [LARGE SCALE GENOMIC DNA]</scope>
    <source>
        <strain>ATCC 25618 / H37Rv</strain>
    </source>
</reference>
<reference key="2">
    <citation type="journal article" date="2005" name="Protein Sci.">
        <title>Mycobacterium tuberculosis serine/threonine kinases PknB, PknD, PknE, and PknF phosphorylate multiple FHA domains.</title>
        <authorList>
            <person name="Grundner C."/>
            <person name="Gay L.M."/>
            <person name="Alber T."/>
        </authorList>
    </citation>
    <scope>PHOSPHORYLATION BY PKNB</scope>
    <scope>MUTAGENESIS OF ARG-459 AND SER-473</scope>
</reference>
<reference key="3">
    <citation type="journal article" date="2011" name="Mol. Cell. Proteomics">
        <title>Proteogenomic analysis of Mycobacterium tuberculosis by high resolution mass spectrometry.</title>
        <authorList>
            <person name="Kelkar D.S."/>
            <person name="Kumar D."/>
            <person name="Kumar P."/>
            <person name="Balakrishnan L."/>
            <person name="Muthusamy B."/>
            <person name="Yadav A.K."/>
            <person name="Shrivastava P."/>
            <person name="Marimuthu A."/>
            <person name="Anand S."/>
            <person name="Sundaram H."/>
            <person name="Kingsbury R."/>
            <person name="Harsha H.C."/>
            <person name="Nair B."/>
            <person name="Prasad T.S."/>
            <person name="Chauhan D.S."/>
            <person name="Katoch K."/>
            <person name="Katoch V.M."/>
            <person name="Kumar P."/>
            <person name="Chaerkady R."/>
            <person name="Ramachandran S."/>
            <person name="Dash D."/>
            <person name="Pandey A."/>
        </authorList>
    </citation>
    <scope>IDENTIFICATION BY MASS SPECTROMETRY [LARGE SCALE ANALYSIS]</scope>
    <source>
        <strain>ATCC 25618 / H37Rv</strain>
    </source>
</reference>
<reference key="4">
    <citation type="journal article" date="2010" name="Structure">
        <title>Structural and functional analysis of phosphothreonine-dependent FHA domain interactions.</title>
        <authorList>
            <person name="Pennell S."/>
            <person name="Westcott S."/>
            <person name="Ortiz-Lombardia M."/>
            <person name="Patel D."/>
            <person name="Li J."/>
            <person name="Nott T.J."/>
            <person name="Mohammed D."/>
            <person name="Buxton R.S."/>
            <person name="Yaffe M.B."/>
            <person name="Verma C."/>
            <person name="Smerdon S.J."/>
        </authorList>
    </citation>
    <scope>X-RAY CRYSTALLOGRAPHY (1.50 ANGSTROMS) OF 431-527</scope>
</reference>
<reference key="5">
    <citation type="journal article" date="2011" name="Structure">
        <title>Structural insight into the Mycobacterium tuberculosis Rv0020c protein and its interaction with the PknB kinase.</title>
        <authorList>
            <person name="Roumestand C."/>
            <person name="Leiba J."/>
            <person name="Galophe N."/>
            <person name="Margeat E."/>
            <person name="Padilla A."/>
            <person name="Bessin Y."/>
            <person name="Barthe P."/>
            <person name="Molle V."/>
            <person name="Cohen-Gonsaud M."/>
        </authorList>
    </citation>
    <scope>STRUCTURE BY NMR OF 1-132</scope>
    <scope>INTERACTION WITH PKNB</scope>
    <scope>DOMAIN</scope>
    <scope>PHOSPHORYLATION AT THR-116</scope>
    <scope>IDENTIFICATION BY MASS SPECTROMETRY</scope>
    <scope>MUTAGENESIS OF THR-116</scope>
    <source>
        <strain>ATCC 25618 / H37Rv</strain>
    </source>
</reference>
<reference key="6">
    <citation type="journal article" date="2012" name="Sci. Signal.">
        <title>A phosphorylated pseudokinase complex controls cell wall synthesis in mycobacteria.</title>
        <authorList>
            <person name="Gee C.L."/>
            <person name="Papavinasasundaram K.G."/>
            <person name="Blair S.R."/>
            <person name="Baer C.E."/>
            <person name="Falick A.M."/>
            <person name="King D.S."/>
            <person name="Griffin J.E."/>
            <person name="Venghatakrishnan H."/>
            <person name="Zukauskas A."/>
            <person name="Wei J.R."/>
            <person name="Dhiman R.K."/>
            <person name="Crick D.C."/>
            <person name="Rubin E.J."/>
            <person name="Sassetti C.M."/>
            <person name="Alber T."/>
        </authorList>
    </citation>
    <scope>X-RAY CRYSTALLOGRAPHY (2.70 ANGSTROMS) OF 390-525</scope>
    <scope>FUNCTION</scope>
    <scope>INTERACTION WITH MVIN</scope>
    <scope>SUBCELLULAR LOCATION</scope>
    <scope>MUTAGENESIS OF ARG-459; GLN-461 AND ARG-474</scope>
</reference>
<organism>
    <name type="scientific">Mycobacterium tuberculosis (strain ATCC 25618 / H37Rv)</name>
    <dbReference type="NCBI Taxonomy" id="83332"/>
    <lineage>
        <taxon>Bacteria</taxon>
        <taxon>Bacillati</taxon>
        <taxon>Actinomycetota</taxon>
        <taxon>Actinomycetes</taxon>
        <taxon>Mycobacteriales</taxon>
        <taxon>Mycobacteriaceae</taxon>
        <taxon>Mycobacterium</taxon>
        <taxon>Mycobacterium tuberculosis complex</taxon>
    </lineage>
</organism>
<proteinExistence type="evidence at protein level"/>
<keyword id="KW-0002">3D-structure</keyword>
<keyword id="KW-0963">Cytoplasm</keyword>
<keyword id="KW-0597">Phosphoprotein</keyword>
<keyword id="KW-1185">Reference proteome</keyword>